<feature type="chain" id="PRO_0000083764" description="3-isopropylmalate dehydrogenase">
    <location>
        <begin position="1"/>
        <end position="345"/>
    </location>
</feature>
<feature type="binding site" evidence="1">
    <location>
        <begin position="76"/>
        <end position="87"/>
    </location>
    <ligand>
        <name>NAD(+)</name>
        <dbReference type="ChEBI" id="CHEBI:57540"/>
    </ligand>
</feature>
<feature type="binding site" evidence="1">
    <location>
        <position position="94"/>
    </location>
    <ligand>
        <name>substrate</name>
    </ligand>
</feature>
<feature type="binding site" evidence="1">
    <location>
        <position position="104"/>
    </location>
    <ligand>
        <name>substrate</name>
    </ligand>
</feature>
<feature type="binding site" evidence="1">
    <location>
        <position position="132"/>
    </location>
    <ligand>
        <name>substrate</name>
    </ligand>
</feature>
<feature type="binding site" evidence="1">
    <location>
        <position position="216"/>
    </location>
    <ligand>
        <name>Mg(2+)</name>
        <dbReference type="ChEBI" id="CHEBI:18420"/>
    </ligand>
</feature>
<feature type="binding site" evidence="1">
    <location>
        <position position="216"/>
    </location>
    <ligand>
        <name>substrate</name>
    </ligand>
</feature>
<feature type="binding site" evidence="1">
    <location>
        <position position="240"/>
    </location>
    <ligand>
        <name>Mg(2+)</name>
        <dbReference type="ChEBI" id="CHEBI:18420"/>
    </ligand>
</feature>
<feature type="binding site" evidence="1">
    <location>
        <position position="244"/>
    </location>
    <ligand>
        <name>Mg(2+)</name>
        <dbReference type="ChEBI" id="CHEBI:18420"/>
    </ligand>
</feature>
<feature type="binding site" evidence="1">
    <location>
        <begin position="274"/>
        <end position="286"/>
    </location>
    <ligand>
        <name>NAD(+)</name>
        <dbReference type="ChEBI" id="CHEBI:57540"/>
    </ligand>
</feature>
<feature type="site" description="Important for catalysis" evidence="1">
    <location>
        <position position="139"/>
    </location>
</feature>
<feature type="site" description="Important for catalysis" evidence="1">
    <location>
        <position position="184"/>
    </location>
</feature>
<comment type="function">
    <text evidence="1">Catalyzes the oxidation of 3-carboxy-2-hydroxy-4-methylpentanoate (3-isopropylmalate) to 3-carboxy-4-methyl-2-oxopentanoate. The product decarboxylates to 4-methyl-2 oxopentanoate.</text>
</comment>
<comment type="catalytic activity">
    <reaction evidence="1">
        <text>(2R,3S)-3-isopropylmalate + NAD(+) = 4-methyl-2-oxopentanoate + CO2 + NADH</text>
        <dbReference type="Rhea" id="RHEA:32271"/>
        <dbReference type="ChEBI" id="CHEBI:16526"/>
        <dbReference type="ChEBI" id="CHEBI:17865"/>
        <dbReference type="ChEBI" id="CHEBI:35121"/>
        <dbReference type="ChEBI" id="CHEBI:57540"/>
        <dbReference type="ChEBI" id="CHEBI:57945"/>
        <dbReference type="EC" id="1.1.1.85"/>
    </reaction>
</comment>
<comment type="cofactor">
    <cofactor evidence="1">
        <name>Mg(2+)</name>
        <dbReference type="ChEBI" id="CHEBI:18420"/>
    </cofactor>
    <cofactor evidence="1">
        <name>Mn(2+)</name>
        <dbReference type="ChEBI" id="CHEBI:29035"/>
    </cofactor>
    <text evidence="1">Binds 1 Mg(2+) or Mn(2+) ion per subunit.</text>
</comment>
<comment type="pathway">
    <text evidence="1">Amino-acid biosynthesis; L-leucine biosynthesis; L-leucine from 3-methyl-2-oxobutanoate: step 3/4.</text>
</comment>
<comment type="subunit">
    <text evidence="1">Homodimer.</text>
</comment>
<comment type="subcellular location">
    <subcellularLocation>
        <location evidence="1">Cytoplasm</location>
    </subcellularLocation>
</comment>
<comment type="similarity">
    <text evidence="1">Belongs to the isocitrate and isopropylmalate dehydrogenases family. LeuB type 1 subfamily.</text>
</comment>
<comment type="sequence caution" evidence="2">
    <conflict type="erroneous initiation">
        <sequence resource="EMBL-CDS" id="AAV62747"/>
    </conflict>
</comment>
<name>LEU3_STRT1</name>
<dbReference type="EC" id="1.1.1.85" evidence="1"/>
<dbReference type="EMBL" id="CP000024">
    <property type="protein sequence ID" value="AAV62747.1"/>
    <property type="status" value="ALT_INIT"/>
    <property type="molecule type" value="Genomic_DNA"/>
</dbReference>
<dbReference type="RefSeq" id="WP_011681247.1">
    <property type="nucleotide sequence ID" value="NC_006449.1"/>
</dbReference>
<dbReference type="SMR" id="Q5LZF3"/>
<dbReference type="GeneID" id="66898996"/>
<dbReference type="KEGG" id="stc:str1202"/>
<dbReference type="HOGENOM" id="CLU_031953_0_3_9"/>
<dbReference type="UniPathway" id="UPA00048">
    <property type="reaction ID" value="UER00072"/>
</dbReference>
<dbReference type="GO" id="GO:0005829">
    <property type="term" value="C:cytosol"/>
    <property type="evidence" value="ECO:0007669"/>
    <property type="project" value="TreeGrafter"/>
</dbReference>
<dbReference type="GO" id="GO:0003862">
    <property type="term" value="F:3-isopropylmalate dehydrogenase activity"/>
    <property type="evidence" value="ECO:0007669"/>
    <property type="project" value="UniProtKB-UniRule"/>
</dbReference>
<dbReference type="GO" id="GO:0000287">
    <property type="term" value="F:magnesium ion binding"/>
    <property type="evidence" value="ECO:0007669"/>
    <property type="project" value="InterPro"/>
</dbReference>
<dbReference type="GO" id="GO:0051287">
    <property type="term" value="F:NAD binding"/>
    <property type="evidence" value="ECO:0007669"/>
    <property type="project" value="InterPro"/>
</dbReference>
<dbReference type="GO" id="GO:0009098">
    <property type="term" value="P:L-leucine biosynthetic process"/>
    <property type="evidence" value="ECO:0007669"/>
    <property type="project" value="UniProtKB-UniRule"/>
</dbReference>
<dbReference type="FunFam" id="3.40.718.10:FF:000006">
    <property type="entry name" value="3-isopropylmalate dehydrogenase"/>
    <property type="match status" value="1"/>
</dbReference>
<dbReference type="Gene3D" id="3.40.718.10">
    <property type="entry name" value="Isopropylmalate Dehydrogenase"/>
    <property type="match status" value="1"/>
</dbReference>
<dbReference type="HAMAP" id="MF_01033">
    <property type="entry name" value="LeuB_type1"/>
    <property type="match status" value="1"/>
</dbReference>
<dbReference type="InterPro" id="IPR019818">
    <property type="entry name" value="IsoCit/isopropylmalate_DH_CS"/>
</dbReference>
<dbReference type="InterPro" id="IPR024084">
    <property type="entry name" value="IsoPropMal-DH-like_dom"/>
</dbReference>
<dbReference type="InterPro" id="IPR004429">
    <property type="entry name" value="Isopropylmalate_DH"/>
</dbReference>
<dbReference type="NCBIfam" id="TIGR00169">
    <property type="entry name" value="leuB"/>
    <property type="match status" value="1"/>
</dbReference>
<dbReference type="PANTHER" id="PTHR42979">
    <property type="entry name" value="3-ISOPROPYLMALATE DEHYDROGENASE"/>
    <property type="match status" value="1"/>
</dbReference>
<dbReference type="PANTHER" id="PTHR42979:SF1">
    <property type="entry name" value="3-ISOPROPYLMALATE DEHYDROGENASE"/>
    <property type="match status" value="1"/>
</dbReference>
<dbReference type="Pfam" id="PF00180">
    <property type="entry name" value="Iso_dh"/>
    <property type="match status" value="1"/>
</dbReference>
<dbReference type="SMART" id="SM01329">
    <property type="entry name" value="Iso_dh"/>
    <property type="match status" value="1"/>
</dbReference>
<dbReference type="SUPFAM" id="SSF53659">
    <property type="entry name" value="Isocitrate/Isopropylmalate dehydrogenase-like"/>
    <property type="match status" value="1"/>
</dbReference>
<dbReference type="PROSITE" id="PS00470">
    <property type="entry name" value="IDH_IMDH"/>
    <property type="match status" value="1"/>
</dbReference>
<accession>Q5LZF3</accession>
<evidence type="ECO:0000255" key="1">
    <source>
        <dbReference type="HAMAP-Rule" id="MF_01033"/>
    </source>
</evidence>
<evidence type="ECO:0000305" key="2"/>
<sequence>MTKKIVTLSGDGIGPEIMAAGLGVLDKVASKIEFDYDVDAKPFGGAGIDAEGHPLPKATLEAAKSADAILLAAIGGPKYDNAPVRPEQGLLAIRKELNLFANIRPVRIFDALKHLSPLKPERIEGVDFVVVRELTGGIYFGEHILEEDKARDINDYSADEIRRIMRRAFKIAQGRGKKVTSIDKQNVLATSKLWRKVADEVSLEFPDVTLEHQLVDSAAMIMITNPARFDVVVTENLFGDILSDESSVLPGTLGVMPSASHSENGPSLYEPIHGSAPDIAGQGIANPISMILSVAMMLRESFNETEGAELIENAVDKTLNQGILTRDLGGQASTAEMTAAIISNL</sequence>
<gene>
    <name evidence="1" type="primary">leuB</name>
    <name type="ordered locus">str1202</name>
</gene>
<protein>
    <recommendedName>
        <fullName evidence="1">3-isopropylmalate dehydrogenase</fullName>
        <ecNumber evidence="1">1.1.1.85</ecNumber>
    </recommendedName>
    <alternativeName>
        <fullName evidence="1">3-IPM-DH</fullName>
    </alternativeName>
    <alternativeName>
        <fullName evidence="1">Beta-IPM dehydrogenase</fullName>
        <shortName evidence="1">IMDH</shortName>
    </alternativeName>
</protein>
<proteinExistence type="inferred from homology"/>
<reference key="1">
    <citation type="journal article" date="2004" name="Nat. Biotechnol.">
        <title>Complete sequence and comparative genome analysis of the dairy bacterium Streptococcus thermophilus.</title>
        <authorList>
            <person name="Bolotin A."/>
            <person name="Quinquis B."/>
            <person name="Renault P."/>
            <person name="Sorokin A."/>
            <person name="Ehrlich S.D."/>
            <person name="Kulakauskas S."/>
            <person name="Lapidus A."/>
            <person name="Goltsman E."/>
            <person name="Mazur M."/>
            <person name="Pusch G.D."/>
            <person name="Fonstein M."/>
            <person name="Overbeek R."/>
            <person name="Kyprides N."/>
            <person name="Purnelle B."/>
            <person name="Prozzi D."/>
            <person name="Ngui K."/>
            <person name="Masuy D."/>
            <person name="Hancy F."/>
            <person name="Burteau S."/>
            <person name="Boutry M."/>
            <person name="Delcour J."/>
            <person name="Goffeau A."/>
            <person name="Hols P."/>
        </authorList>
    </citation>
    <scope>NUCLEOTIDE SEQUENCE [LARGE SCALE GENOMIC DNA]</scope>
    <source>
        <strain>CNRZ 1066</strain>
    </source>
</reference>
<keyword id="KW-0028">Amino-acid biosynthesis</keyword>
<keyword id="KW-0100">Branched-chain amino acid biosynthesis</keyword>
<keyword id="KW-0963">Cytoplasm</keyword>
<keyword id="KW-0432">Leucine biosynthesis</keyword>
<keyword id="KW-0460">Magnesium</keyword>
<keyword id="KW-0464">Manganese</keyword>
<keyword id="KW-0479">Metal-binding</keyword>
<keyword id="KW-0520">NAD</keyword>
<keyword id="KW-0560">Oxidoreductase</keyword>
<organism>
    <name type="scientific">Streptococcus thermophilus (strain CNRZ 1066)</name>
    <dbReference type="NCBI Taxonomy" id="299768"/>
    <lineage>
        <taxon>Bacteria</taxon>
        <taxon>Bacillati</taxon>
        <taxon>Bacillota</taxon>
        <taxon>Bacilli</taxon>
        <taxon>Lactobacillales</taxon>
        <taxon>Streptococcaceae</taxon>
        <taxon>Streptococcus</taxon>
    </lineage>
</organism>